<accession>P49502</accession>
<reference key="1">
    <citation type="journal article" date="1995" name="Plant Mol. Biol. Rep.">
        <title>The chloroplast genome of a chlorophyll a+c-containing alga, Odontella sinensis.</title>
        <authorList>
            <person name="Kowallik K.V."/>
            <person name="Stoebe B."/>
            <person name="Schaffran I."/>
            <person name="Kroth-Pancic P."/>
            <person name="Freier U."/>
        </authorList>
    </citation>
    <scope>NUCLEOTIDE SEQUENCE [LARGE SCALE GENOMIC DNA]</scope>
</reference>
<evidence type="ECO:0000255" key="1">
    <source>
        <dbReference type="HAMAP-Rule" id="MF_00537"/>
    </source>
</evidence>
<evidence type="ECO:0000305" key="2"/>
<comment type="function">
    <text evidence="1">Binds 16S rRNA, required for the assembly of 30S particles.</text>
</comment>
<comment type="subunit">
    <text evidence="1">Part of the 30S ribosomal subunit.</text>
</comment>
<comment type="subcellular location">
    <subcellularLocation>
        <location>Plastid</location>
        <location>Chloroplast</location>
    </subcellularLocation>
</comment>
<comment type="similarity">
    <text evidence="1">Belongs to the universal ribosomal protein uS14 family.</text>
</comment>
<protein>
    <recommendedName>
        <fullName evidence="1">Small ribosomal subunit protein uS14c</fullName>
    </recommendedName>
    <alternativeName>
        <fullName evidence="2">30S ribosomal protein S14, chloroplastic</fullName>
    </alternativeName>
</protein>
<feature type="chain" id="PRO_0000130979" description="Small ribosomal subunit protein uS14c">
    <location>
        <begin position="1"/>
        <end position="100"/>
    </location>
</feature>
<geneLocation type="chloroplast"/>
<sequence>MAKKSMIEREKKRIKLNNKYTPKRNTLLQAYRQTEDFQSRLDIHSKIQKLPRNSAKNRIRNRCWKTGRPRGFYRDFGVSRHVLREMAHSCLLPGVTKSSW</sequence>
<dbReference type="EMBL" id="Z67753">
    <property type="protein sequence ID" value="CAA91675.1"/>
    <property type="molecule type" value="Genomic_DNA"/>
</dbReference>
<dbReference type="PIR" id="S78302">
    <property type="entry name" value="S78302"/>
</dbReference>
<dbReference type="RefSeq" id="NP_043643.1">
    <property type="nucleotide sequence ID" value="NC_001713.1"/>
</dbReference>
<dbReference type="SMR" id="P49502"/>
<dbReference type="GeneID" id="801760"/>
<dbReference type="GO" id="GO:0009507">
    <property type="term" value="C:chloroplast"/>
    <property type="evidence" value="ECO:0007669"/>
    <property type="project" value="UniProtKB-SubCell"/>
</dbReference>
<dbReference type="GO" id="GO:0015935">
    <property type="term" value="C:small ribosomal subunit"/>
    <property type="evidence" value="ECO:0007669"/>
    <property type="project" value="TreeGrafter"/>
</dbReference>
<dbReference type="GO" id="GO:0019843">
    <property type="term" value="F:rRNA binding"/>
    <property type="evidence" value="ECO:0007669"/>
    <property type="project" value="UniProtKB-UniRule"/>
</dbReference>
<dbReference type="GO" id="GO:0003735">
    <property type="term" value="F:structural constituent of ribosome"/>
    <property type="evidence" value="ECO:0007669"/>
    <property type="project" value="InterPro"/>
</dbReference>
<dbReference type="GO" id="GO:0006412">
    <property type="term" value="P:translation"/>
    <property type="evidence" value="ECO:0007669"/>
    <property type="project" value="UniProtKB-UniRule"/>
</dbReference>
<dbReference type="FunFam" id="1.10.287.1480:FF:000001">
    <property type="entry name" value="30S ribosomal protein S14"/>
    <property type="match status" value="1"/>
</dbReference>
<dbReference type="Gene3D" id="1.10.287.1480">
    <property type="match status" value="1"/>
</dbReference>
<dbReference type="HAMAP" id="MF_00537">
    <property type="entry name" value="Ribosomal_uS14_1"/>
    <property type="match status" value="1"/>
</dbReference>
<dbReference type="InterPro" id="IPR001209">
    <property type="entry name" value="Ribosomal_uS14"/>
</dbReference>
<dbReference type="InterPro" id="IPR023036">
    <property type="entry name" value="Ribosomal_uS14_bac/plastid"/>
</dbReference>
<dbReference type="InterPro" id="IPR018271">
    <property type="entry name" value="Ribosomal_uS14_CS"/>
</dbReference>
<dbReference type="NCBIfam" id="NF006477">
    <property type="entry name" value="PRK08881.1"/>
    <property type="match status" value="1"/>
</dbReference>
<dbReference type="PANTHER" id="PTHR19836">
    <property type="entry name" value="30S RIBOSOMAL PROTEIN S14"/>
    <property type="match status" value="1"/>
</dbReference>
<dbReference type="PANTHER" id="PTHR19836:SF19">
    <property type="entry name" value="SMALL RIBOSOMAL SUBUNIT PROTEIN US14M"/>
    <property type="match status" value="1"/>
</dbReference>
<dbReference type="Pfam" id="PF00253">
    <property type="entry name" value="Ribosomal_S14"/>
    <property type="match status" value="1"/>
</dbReference>
<dbReference type="SUPFAM" id="SSF57716">
    <property type="entry name" value="Glucocorticoid receptor-like (DNA-binding domain)"/>
    <property type="match status" value="1"/>
</dbReference>
<dbReference type="PROSITE" id="PS00527">
    <property type="entry name" value="RIBOSOMAL_S14"/>
    <property type="match status" value="1"/>
</dbReference>
<gene>
    <name evidence="1" type="primary">rps14</name>
</gene>
<name>RR14_TRICV</name>
<organism>
    <name type="scientific">Trieres chinensis</name>
    <name type="common">Marine centric diatom</name>
    <name type="synonym">Odontella sinensis</name>
    <dbReference type="NCBI Taxonomy" id="1514140"/>
    <lineage>
        <taxon>Eukaryota</taxon>
        <taxon>Sar</taxon>
        <taxon>Stramenopiles</taxon>
        <taxon>Ochrophyta</taxon>
        <taxon>Bacillariophyta</taxon>
        <taxon>Mediophyceae</taxon>
        <taxon>Biddulphiophycidae</taxon>
        <taxon>Eupodiscales</taxon>
        <taxon>Parodontellaceae</taxon>
        <taxon>Trieres</taxon>
    </lineage>
</organism>
<keyword id="KW-0150">Chloroplast</keyword>
<keyword id="KW-0934">Plastid</keyword>
<keyword id="KW-0687">Ribonucleoprotein</keyword>
<keyword id="KW-0689">Ribosomal protein</keyword>
<keyword id="KW-0694">RNA-binding</keyword>
<keyword id="KW-0699">rRNA-binding</keyword>
<proteinExistence type="inferred from homology"/>